<comment type="function">
    <text evidence="5 6">Deaminates adenosines to inosines in tRNA-Arg(ACG). Exclusively involved in A-to-I editing of the prokaryote-type chloroplast-tRNA and not involved in C-to-U editing.</text>
</comment>
<comment type="catalytic activity">
    <reaction evidence="6">
        <text>adenosine(34) in tRNA + H2O + H(+) = inosine(34) in tRNA + NH4(+)</text>
        <dbReference type="Rhea" id="RHEA:43168"/>
        <dbReference type="Rhea" id="RHEA-COMP:10373"/>
        <dbReference type="Rhea" id="RHEA-COMP:10374"/>
        <dbReference type="ChEBI" id="CHEBI:15377"/>
        <dbReference type="ChEBI" id="CHEBI:15378"/>
        <dbReference type="ChEBI" id="CHEBI:28938"/>
        <dbReference type="ChEBI" id="CHEBI:74411"/>
        <dbReference type="ChEBI" id="CHEBI:82852"/>
        <dbReference type="EC" id="3.5.4.33"/>
    </reaction>
</comment>
<comment type="cofactor">
    <cofactor evidence="1">
        <name>Zn(2+)</name>
        <dbReference type="ChEBI" id="CHEBI:29105"/>
    </cofactor>
    <text evidence="1">Binds 1 zinc ion per subunit.</text>
</comment>
<comment type="subunit">
    <text evidence="1">Homodimer.</text>
</comment>
<comment type="subcellular location">
    <subcellularLocation>
        <location evidence="5 6">Plastid</location>
        <location evidence="5 6">Chloroplast</location>
    </subcellularLocation>
</comment>
<comment type="domain">
    <text evidence="6">The C-terminus (843-1307) is sufficient for the deamination.</text>
</comment>
<comment type="disruption phenotype">
    <text evidence="6">Loss of cp-tRNA editing, decreased chloroplast translation and impaired photosynthesis.</text>
</comment>
<comment type="miscellaneous">
    <text evidence="8">Since the absence of A-to-I editing is compatible with plant survival, a limited two out of three codon recognition occurs in chloroplasts, although this mechanism is less efficient than wobble pairing.</text>
</comment>
<comment type="similarity">
    <text evidence="7">Belongs to the cytidine and deoxycytidylate deaminase family.</text>
</comment>
<gene>
    <name type="primary">TADA</name>
    <name type="ordered locus">At1g68720</name>
    <name type="ORF">F14K14.18</name>
    <name type="ORF">F24J5.5</name>
</gene>
<dbReference type="EC" id="3.5.4.33"/>
<dbReference type="EMBL" id="AC008075">
    <property type="protein sequence ID" value="AAD49971.1"/>
    <property type="molecule type" value="Genomic_DNA"/>
</dbReference>
<dbReference type="EMBL" id="AC011914">
    <property type="protein sequence ID" value="AAG52046.1"/>
    <property type="molecule type" value="Genomic_DNA"/>
</dbReference>
<dbReference type="EMBL" id="CP002684">
    <property type="protein sequence ID" value="AEE34831.1"/>
    <property type="molecule type" value="Genomic_DNA"/>
</dbReference>
<dbReference type="EMBL" id="AK117889">
    <property type="protein sequence ID" value="BAC42528.1"/>
    <property type="molecule type" value="mRNA"/>
</dbReference>
<dbReference type="EMBL" id="BT010731">
    <property type="protein sequence ID" value="AAR23701.1"/>
    <property type="molecule type" value="mRNA"/>
</dbReference>
<dbReference type="PIR" id="G96711">
    <property type="entry name" value="G96711"/>
</dbReference>
<dbReference type="RefSeq" id="NP_177039.1">
    <property type="nucleotide sequence ID" value="NM_105544.3"/>
</dbReference>
<dbReference type="SMR" id="Q9S7I0"/>
<dbReference type="FunCoup" id="Q9S7I0">
    <property type="interactions" value="1791"/>
</dbReference>
<dbReference type="STRING" id="3702.Q9S7I0"/>
<dbReference type="GlyGen" id="Q9S7I0">
    <property type="glycosylation" value="1 site"/>
</dbReference>
<dbReference type="iPTMnet" id="Q9S7I0"/>
<dbReference type="PaxDb" id="3702-AT1G68720.1"/>
<dbReference type="ProteomicsDB" id="234118"/>
<dbReference type="EnsemblPlants" id="AT1G68720.1">
    <property type="protein sequence ID" value="AT1G68720.1"/>
    <property type="gene ID" value="AT1G68720"/>
</dbReference>
<dbReference type="GeneID" id="843202"/>
<dbReference type="Gramene" id="AT1G68720.1">
    <property type="protein sequence ID" value="AT1G68720.1"/>
    <property type="gene ID" value="AT1G68720"/>
</dbReference>
<dbReference type="KEGG" id="ath:AT1G68720"/>
<dbReference type="Araport" id="AT1G68720"/>
<dbReference type="TAIR" id="AT1G68720">
    <property type="gene designation" value="TADA"/>
</dbReference>
<dbReference type="eggNOG" id="KOG1018">
    <property type="taxonomic scope" value="Eukaryota"/>
</dbReference>
<dbReference type="HOGENOM" id="CLU_006132_0_0_1"/>
<dbReference type="InParanoid" id="Q9S7I0"/>
<dbReference type="OMA" id="EEDMEIH"/>
<dbReference type="PhylomeDB" id="Q9S7I0"/>
<dbReference type="BRENDA" id="3.5.4.33">
    <property type="organism ID" value="399"/>
</dbReference>
<dbReference type="PRO" id="PR:Q9S7I0"/>
<dbReference type="Proteomes" id="UP000006548">
    <property type="component" value="Chromosome 1"/>
</dbReference>
<dbReference type="ExpressionAtlas" id="Q9S7I0">
    <property type="expression patterns" value="baseline and differential"/>
</dbReference>
<dbReference type="GO" id="GO:0009507">
    <property type="term" value="C:chloroplast"/>
    <property type="evidence" value="ECO:0000314"/>
    <property type="project" value="TAIR"/>
</dbReference>
<dbReference type="GO" id="GO:0046872">
    <property type="term" value="F:metal ion binding"/>
    <property type="evidence" value="ECO:0007669"/>
    <property type="project" value="UniProtKB-KW"/>
</dbReference>
<dbReference type="GO" id="GO:0008251">
    <property type="term" value="F:tRNA-specific adenosine deaminase activity"/>
    <property type="evidence" value="ECO:0000314"/>
    <property type="project" value="TAIR"/>
</dbReference>
<dbReference type="GO" id="GO:0052717">
    <property type="term" value="F:tRNA-specific adenosine-34 deaminase activity"/>
    <property type="evidence" value="ECO:0007669"/>
    <property type="project" value="UniProtKB-EC"/>
</dbReference>
<dbReference type="GO" id="GO:0002100">
    <property type="term" value="P:tRNA wobble adenosine to inosine editing"/>
    <property type="evidence" value="ECO:0000314"/>
    <property type="project" value="TAIR"/>
</dbReference>
<dbReference type="CDD" id="cd01285">
    <property type="entry name" value="nucleoside_deaminase"/>
    <property type="match status" value="1"/>
</dbReference>
<dbReference type="FunFam" id="3.40.140.10:FF:000005">
    <property type="entry name" value="tRNA-specific adenosine deaminase"/>
    <property type="match status" value="1"/>
</dbReference>
<dbReference type="Gene3D" id="3.40.140.10">
    <property type="entry name" value="Cytidine Deaminase, domain 2"/>
    <property type="match status" value="1"/>
</dbReference>
<dbReference type="HAMAP" id="MF_00972">
    <property type="entry name" value="tRNA_aden_deaminase"/>
    <property type="match status" value="1"/>
</dbReference>
<dbReference type="InterPro" id="IPR002125">
    <property type="entry name" value="CMP_dCMP_dom"/>
</dbReference>
<dbReference type="InterPro" id="IPR016193">
    <property type="entry name" value="Cytidine_deaminase-like"/>
</dbReference>
<dbReference type="InterPro" id="IPR028883">
    <property type="entry name" value="tRNA_aden_deaminase"/>
</dbReference>
<dbReference type="PANTHER" id="PTHR11079">
    <property type="entry name" value="CYTOSINE DEAMINASE FAMILY MEMBER"/>
    <property type="match status" value="1"/>
</dbReference>
<dbReference type="PANTHER" id="PTHR11079:SF179">
    <property type="entry name" value="TRNA(ADENINE(34)) DEAMINASE, CHLOROPLASTIC"/>
    <property type="match status" value="1"/>
</dbReference>
<dbReference type="Pfam" id="PF14437">
    <property type="entry name" value="MafB19-deam"/>
    <property type="match status" value="1"/>
</dbReference>
<dbReference type="SUPFAM" id="SSF53927">
    <property type="entry name" value="Cytidine deaminase-like"/>
    <property type="match status" value="1"/>
</dbReference>
<dbReference type="PROSITE" id="PS51747">
    <property type="entry name" value="CYT_DCMP_DEAMINASES_2"/>
    <property type="match status" value="1"/>
</dbReference>
<proteinExistence type="evidence at protein level"/>
<protein>
    <recommendedName>
        <fullName>tRNA(adenine(34)) deaminase, chloroplastic</fullName>
        <shortName>TADA</shortName>
        <ecNumber>3.5.4.33</ecNumber>
    </recommendedName>
    <alternativeName>
        <fullName>tRNA adenosine deaminase arginine</fullName>
    </alternativeName>
    <alternativeName>
        <fullName>tRNA arginine adenosine deaminase</fullName>
    </alternativeName>
</protein>
<feature type="transit peptide" description="Chloroplast" evidence="2">
    <location>
        <begin position="1"/>
        <end position="55"/>
    </location>
</feature>
<feature type="chain" id="PRO_0000305189" description="tRNA(adenine(34)) deaminase, chloroplastic">
    <location>
        <begin position="56"/>
        <end position="1307"/>
    </location>
</feature>
<feature type="domain" description="CMP/dCMP-type deaminase" evidence="3">
    <location>
        <begin position="1108"/>
        <end position="1230"/>
    </location>
</feature>
<feature type="region of interest" description="Disordered" evidence="4">
    <location>
        <begin position="245"/>
        <end position="377"/>
    </location>
</feature>
<feature type="region of interest" description="Disordered" evidence="4">
    <location>
        <begin position="439"/>
        <end position="458"/>
    </location>
</feature>
<feature type="region of interest" description="Disordered" evidence="4">
    <location>
        <begin position="544"/>
        <end position="563"/>
    </location>
</feature>
<feature type="region of interest" description="Disordered" evidence="4">
    <location>
        <begin position="576"/>
        <end position="618"/>
    </location>
</feature>
<feature type="region of interest" description="Disordered" evidence="4">
    <location>
        <begin position="753"/>
        <end position="807"/>
    </location>
</feature>
<feature type="region of interest" description="Disordered" evidence="4">
    <location>
        <begin position="837"/>
        <end position="957"/>
    </location>
</feature>
<feature type="region of interest" description="Disordered" evidence="4">
    <location>
        <begin position="975"/>
        <end position="1073"/>
    </location>
</feature>
<feature type="region of interest" description="Disordered" evidence="4">
    <location>
        <begin position="1268"/>
        <end position="1293"/>
    </location>
</feature>
<feature type="coiled-coil region" evidence="2">
    <location>
        <begin position="280"/>
        <end position="309"/>
    </location>
</feature>
<feature type="compositionally biased region" description="Low complexity" evidence="4">
    <location>
        <begin position="267"/>
        <end position="278"/>
    </location>
</feature>
<feature type="compositionally biased region" description="Acidic residues" evidence="4">
    <location>
        <begin position="281"/>
        <end position="292"/>
    </location>
</feature>
<feature type="compositionally biased region" description="Basic and acidic residues" evidence="4">
    <location>
        <begin position="293"/>
        <end position="321"/>
    </location>
</feature>
<feature type="compositionally biased region" description="Polar residues" evidence="4">
    <location>
        <begin position="367"/>
        <end position="377"/>
    </location>
</feature>
<feature type="compositionally biased region" description="Basic and acidic residues" evidence="4">
    <location>
        <begin position="439"/>
        <end position="448"/>
    </location>
</feature>
<feature type="compositionally biased region" description="Polar residues" evidence="4">
    <location>
        <begin position="546"/>
        <end position="563"/>
    </location>
</feature>
<feature type="compositionally biased region" description="Polar residues" evidence="4">
    <location>
        <begin position="582"/>
        <end position="591"/>
    </location>
</feature>
<feature type="compositionally biased region" description="Basic and acidic residues" evidence="4">
    <location>
        <begin position="592"/>
        <end position="615"/>
    </location>
</feature>
<feature type="compositionally biased region" description="Basic and acidic residues" evidence="4">
    <location>
        <begin position="760"/>
        <end position="771"/>
    </location>
</feature>
<feature type="compositionally biased region" description="Polar residues" evidence="4">
    <location>
        <begin position="852"/>
        <end position="863"/>
    </location>
</feature>
<feature type="compositionally biased region" description="Basic and acidic residues" evidence="4">
    <location>
        <begin position="866"/>
        <end position="883"/>
    </location>
</feature>
<feature type="compositionally biased region" description="Polar residues" evidence="4">
    <location>
        <begin position="895"/>
        <end position="907"/>
    </location>
</feature>
<feature type="compositionally biased region" description="Polar residues" evidence="4">
    <location>
        <begin position="924"/>
        <end position="947"/>
    </location>
</feature>
<feature type="compositionally biased region" description="Polar residues" evidence="4">
    <location>
        <begin position="1045"/>
        <end position="1073"/>
    </location>
</feature>
<feature type="active site" description="Proton donor" evidence="1">
    <location>
        <position position="1161"/>
    </location>
</feature>
<feature type="binding site" evidence="1">
    <location>
        <position position="1159"/>
    </location>
    <ligand>
        <name>Zn(2+)</name>
        <dbReference type="ChEBI" id="CHEBI:29105"/>
        <note>catalytic</note>
    </ligand>
</feature>
<feature type="binding site" evidence="1">
    <location>
        <position position="1189"/>
    </location>
    <ligand>
        <name>Zn(2+)</name>
        <dbReference type="ChEBI" id="CHEBI:29105"/>
        <note>catalytic</note>
    </ligand>
</feature>
<feature type="binding site" evidence="1">
    <location>
        <position position="1192"/>
    </location>
    <ligand>
        <name>Zn(2+)</name>
        <dbReference type="ChEBI" id="CHEBI:29105"/>
        <note>catalytic</note>
    </ligand>
</feature>
<feature type="sequence conflict" description="In Ref. 4; BAC42528/AAR23701." evidence="7" ref="4">
    <original>L</original>
    <variation>S</variation>
    <location>
        <position position="883"/>
    </location>
</feature>
<accession>Q9S7I0</accession>
<accession>Q8GY37</accession>
<keyword id="KW-0150">Chloroplast</keyword>
<keyword id="KW-0175">Coiled coil</keyword>
<keyword id="KW-0378">Hydrolase</keyword>
<keyword id="KW-0479">Metal-binding</keyword>
<keyword id="KW-0934">Plastid</keyword>
<keyword id="KW-1185">Reference proteome</keyword>
<keyword id="KW-0809">Transit peptide</keyword>
<keyword id="KW-0819">tRNA processing</keyword>
<keyword id="KW-0862">Zinc</keyword>
<evidence type="ECO:0000250" key="1"/>
<evidence type="ECO:0000255" key="2"/>
<evidence type="ECO:0000255" key="3">
    <source>
        <dbReference type="PROSITE-ProRule" id="PRU01083"/>
    </source>
</evidence>
<evidence type="ECO:0000256" key="4">
    <source>
        <dbReference type="SAM" id="MobiDB-lite"/>
    </source>
</evidence>
<evidence type="ECO:0000269" key="5">
    <source>
    </source>
</evidence>
<evidence type="ECO:0000269" key="6">
    <source>
    </source>
</evidence>
<evidence type="ECO:0000305" key="7"/>
<evidence type="ECO:0000305" key="8">
    <source>
    </source>
</evidence>
<name>TADA_ARATH</name>
<sequence>MFNTYTNSLQWPIRSRNQQDYCSLLPERSESYKLSKAYTSSRCYCVSSRSSCCCCCSTPSSSSFVKPKVLINPGFVLYGVRQSTLIQWPSFQRRLLVGGGRLMGCEVYSSCDGIRRKNRSFKLRCLEESDECCGGRSCSDDVEAMISFLSEELIDEERKWNLVSRVKEKKKVGNVRKVSVEGSNSYGNGRVSQRVKKPEGFGRRKEIKEDVKLNERYDCEHCGRRKKSSELESESRRGSKLVTGEYIGKSYRGDEEREVRPRRRKSSSCSSYYSLASSGEFESDTEDQEEDVEIYRENVRSSEKKVVDQSAKRLKSRKEASQMHSRKKRDESSTGVDSRYQKQIFEEGENSNQAVTLNQRRRKKFSQTENRVSESTGNYEEDMEIHEVHVNDAETSSQNQKLFNEREDYRVHSIRNDSGNENIESSQHQLKERLETRYSSEDRVSEMRRRTKYSSSQEEGINVLQNFPEVTNNQQPLVEERISKQAGTRRTTEHISESSEIHDIDIRNTYVSQREDQIRNQEVHAGLVSGLQSERKQQDYHIEHNPLQTTQSDRTSVSVSHTSDAVRYTEIQRKSEKRLIGQGSTTAVQSDSKVEKNGAQKEDSRLDHANSKKDGQTTLGLQSYQSKLSEEASSSQSSLMASRTKLQLVDLVSEEMQGSETTLIPPSSQLVSRRSGQSYRTGGVSIQEISHGTSESGYTTAFEHPRAGASVNSQSAGELMGFTSHEDAMGSAHRLEQASEKYVGEFVKKAKHGVINPETEEQRAESNQLKRRDSRRSSGGSGAKGPSDEMWVTDSAQGTPHPGATEGNAAVGNAIFKRNGRSLWNVIADIARLRWGSRAGSPDSSAKPAGRSSPNESVSSATWFSGREHDGSSDDNTKGDKVLPQEAPSLHQVEVGQTSPRSQSEYPGTTKLKQRSERHEGVVSSPSSTILEGGSVSNRMSSTSGNQIVGVDEEEGGNFEFRLPETALTEVPMKLPSRNLIRSPPIKESSESSLTEASSDQNFTVGEGRRYPRMDAGQNPLLFPGRNLRSPAVMEPPVPRPRMVSGSSSLREQVEQQQPLSAKSQEETGSVSADSALIQRKLQRNKQVVRDSFEEWEEAYKVEAERRTVDEIFMREALVEAKKAADTWEVPVGAVLVHDGKIIARGYNLVEELRDSTAHAEMICIREGSKALRSWRLADTTLYVTLEPCPMCAGAILQARVNTLVWGAPNKLLGADGSWIRLFPGGEGNGSEASEKPPPPVHPFHPKMTIRRGVLESECAQTMQQFFQLRRKKKDKNSDPPTPTDHHHHHLPKLLNKMHQVLPFFCL</sequence>
<reference key="1">
    <citation type="journal article" date="2000" name="Nature">
        <title>Sequence and analysis of chromosome 1 of the plant Arabidopsis thaliana.</title>
        <authorList>
            <person name="Theologis A."/>
            <person name="Ecker J.R."/>
            <person name="Palm C.J."/>
            <person name="Federspiel N.A."/>
            <person name="Kaul S."/>
            <person name="White O."/>
            <person name="Alonso J."/>
            <person name="Altafi H."/>
            <person name="Araujo R."/>
            <person name="Bowman C.L."/>
            <person name="Brooks S.Y."/>
            <person name="Buehler E."/>
            <person name="Chan A."/>
            <person name="Chao Q."/>
            <person name="Chen H."/>
            <person name="Cheuk R.F."/>
            <person name="Chin C.W."/>
            <person name="Chung M.K."/>
            <person name="Conn L."/>
            <person name="Conway A.B."/>
            <person name="Conway A.R."/>
            <person name="Creasy T.H."/>
            <person name="Dewar K."/>
            <person name="Dunn P."/>
            <person name="Etgu P."/>
            <person name="Feldblyum T.V."/>
            <person name="Feng J.-D."/>
            <person name="Fong B."/>
            <person name="Fujii C.Y."/>
            <person name="Gill J.E."/>
            <person name="Goldsmith A.D."/>
            <person name="Haas B."/>
            <person name="Hansen N.F."/>
            <person name="Hughes B."/>
            <person name="Huizar L."/>
            <person name="Hunter J.L."/>
            <person name="Jenkins J."/>
            <person name="Johnson-Hopson C."/>
            <person name="Khan S."/>
            <person name="Khaykin E."/>
            <person name="Kim C.J."/>
            <person name="Koo H.L."/>
            <person name="Kremenetskaia I."/>
            <person name="Kurtz D.B."/>
            <person name="Kwan A."/>
            <person name="Lam B."/>
            <person name="Langin-Hooper S."/>
            <person name="Lee A."/>
            <person name="Lee J.M."/>
            <person name="Lenz C.A."/>
            <person name="Li J.H."/>
            <person name="Li Y.-P."/>
            <person name="Lin X."/>
            <person name="Liu S.X."/>
            <person name="Liu Z.A."/>
            <person name="Luros J.S."/>
            <person name="Maiti R."/>
            <person name="Marziali A."/>
            <person name="Militscher J."/>
            <person name="Miranda M."/>
            <person name="Nguyen M."/>
            <person name="Nierman W.C."/>
            <person name="Osborne B.I."/>
            <person name="Pai G."/>
            <person name="Peterson J."/>
            <person name="Pham P.K."/>
            <person name="Rizzo M."/>
            <person name="Rooney T."/>
            <person name="Rowley D."/>
            <person name="Sakano H."/>
            <person name="Salzberg S.L."/>
            <person name="Schwartz J.R."/>
            <person name="Shinn P."/>
            <person name="Southwick A.M."/>
            <person name="Sun H."/>
            <person name="Tallon L.J."/>
            <person name="Tambunga G."/>
            <person name="Toriumi M.J."/>
            <person name="Town C.D."/>
            <person name="Utterback T."/>
            <person name="Van Aken S."/>
            <person name="Vaysberg M."/>
            <person name="Vysotskaia V.S."/>
            <person name="Walker M."/>
            <person name="Wu D."/>
            <person name="Yu G."/>
            <person name="Fraser C.M."/>
            <person name="Venter J.C."/>
            <person name="Davis R.W."/>
        </authorList>
    </citation>
    <scope>NUCLEOTIDE SEQUENCE [LARGE SCALE GENOMIC DNA]</scope>
    <source>
        <strain>cv. Columbia</strain>
    </source>
</reference>
<reference key="2">
    <citation type="journal article" date="2017" name="Plant J.">
        <title>Araport11: a complete reannotation of the Arabidopsis thaliana reference genome.</title>
        <authorList>
            <person name="Cheng C.Y."/>
            <person name="Krishnakumar V."/>
            <person name="Chan A.P."/>
            <person name="Thibaud-Nissen F."/>
            <person name="Schobel S."/>
            <person name="Town C.D."/>
        </authorList>
    </citation>
    <scope>GENOME REANNOTATION</scope>
    <source>
        <strain>cv. Columbia</strain>
    </source>
</reference>
<reference key="3">
    <citation type="journal article" date="2002" name="Science">
        <title>Functional annotation of a full-length Arabidopsis cDNA collection.</title>
        <authorList>
            <person name="Seki M."/>
            <person name="Narusaka M."/>
            <person name="Kamiya A."/>
            <person name="Ishida J."/>
            <person name="Satou M."/>
            <person name="Sakurai T."/>
            <person name="Nakajima M."/>
            <person name="Enju A."/>
            <person name="Akiyama K."/>
            <person name="Oono Y."/>
            <person name="Muramatsu M."/>
            <person name="Hayashizaki Y."/>
            <person name="Kawai J."/>
            <person name="Carninci P."/>
            <person name="Itoh M."/>
            <person name="Ishii Y."/>
            <person name="Arakawa T."/>
            <person name="Shibata K."/>
            <person name="Shinagawa A."/>
            <person name="Shinozaki K."/>
        </authorList>
    </citation>
    <scope>NUCLEOTIDE SEQUENCE [LARGE SCALE MRNA]</scope>
    <source>
        <strain>cv. Columbia</strain>
    </source>
</reference>
<reference key="4">
    <citation type="submission" date="2003-11" db="EMBL/GenBank/DDBJ databases">
        <title>Arabidopsis cDNA clones.</title>
        <authorList>
            <person name="Cheuk R.F."/>
            <person name="Chen H."/>
            <person name="Kim C.J."/>
            <person name="Shinn P."/>
            <person name="Carninci P."/>
            <person name="Hayashizaki Y."/>
            <person name="Ishida J."/>
            <person name="Kamiya A."/>
            <person name="Kawai J."/>
            <person name="Narusaka M."/>
            <person name="Sakurai T."/>
            <person name="Satou M."/>
            <person name="Seki M."/>
            <person name="Shinozaki K."/>
            <person name="Ecker J.R."/>
        </authorList>
    </citation>
    <scope>NUCLEOTIDE SEQUENCE [LARGE SCALE MRNA]</scope>
    <source>
        <strain>cv. Columbia</strain>
    </source>
</reference>
<reference key="5">
    <citation type="journal article" date="2009" name="Plant Cell">
        <title>Arabidopsis tRNA adenosine deaminase arginine edits the wobble nucleotide of chloroplast tRNAArg(ACG) and is essential for efficient chloroplast translation.</title>
        <authorList>
            <person name="Delannoy E."/>
            <person name="Le Ret M."/>
            <person name="Faivre-Nitschke E."/>
            <person name="Estavillo G.M."/>
            <person name="Bergdoll M."/>
            <person name="Taylor N.L."/>
            <person name="Pogson B.J."/>
            <person name="Small I."/>
            <person name="Imbault P."/>
            <person name="Gualberto J.M."/>
        </authorList>
    </citation>
    <scope>FUNCTION</scope>
    <scope>CATALYTIC ACTIVITY</scope>
    <scope>SUBCELLULAR LOCATION</scope>
    <scope>DISRUPTION PHENOTYPE</scope>
    <scope>3D-STRUCTURE MODELING</scope>
    <scope>DOMAIN</scope>
</reference>
<reference key="6">
    <citation type="journal article" date="2009" name="RNA">
        <title>Identification of the chloroplast adenosine-to-inosine tRNA editing enzyme.</title>
        <authorList>
            <person name="Karcher D."/>
            <person name="Bock R."/>
        </authorList>
    </citation>
    <scope>FUNCTION</scope>
    <scope>SUBCELLULAR LOCATION</scope>
</reference>
<organism>
    <name type="scientific">Arabidopsis thaliana</name>
    <name type="common">Mouse-ear cress</name>
    <dbReference type="NCBI Taxonomy" id="3702"/>
    <lineage>
        <taxon>Eukaryota</taxon>
        <taxon>Viridiplantae</taxon>
        <taxon>Streptophyta</taxon>
        <taxon>Embryophyta</taxon>
        <taxon>Tracheophyta</taxon>
        <taxon>Spermatophyta</taxon>
        <taxon>Magnoliopsida</taxon>
        <taxon>eudicotyledons</taxon>
        <taxon>Gunneridae</taxon>
        <taxon>Pentapetalae</taxon>
        <taxon>rosids</taxon>
        <taxon>malvids</taxon>
        <taxon>Brassicales</taxon>
        <taxon>Brassicaceae</taxon>
        <taxon>Camelineae</taxon>
        <taxon>Arabidopsis</taxon>
    </lineage>
</organism>